<keyword id="KW-0997">Cell inner membrane</keyword>
<keyword id="KW-1003">Cell membrane</keyword>
<keyword id="KW-0472">Membrane</keyword>
<keyword id="KW-1185">Reference proteome</keyword>
<keyword id="KW-0812">Transmembrane</keyword>
<keyword id="KW-1133">Transmembrane helix</keyword>
<gene>
    <name evidence="1" type="primary">yciB</name>
    <name type="ordered locus">CKO_01331</name>
</gene>
<evidence type="ECO:0000255" key="1">
    <source>
        <dbReference type="HAMAP-Rule" id="MF_00189"/>
    </source>
</evidence>
<feature type="chain" id="PRO_1000021005" description="Inner membrane-spanning protein YciB">
    <location>
        <begin position="1"/>
        <end position="179"/>
    </location>
</feature>
<feature type="transmembrane region" description="Helical" evidence="1">
    <location>
        <begin position="22"/>
        <end position="42"/>
    </location>
</feature>
<feature type="transmembrane region" description="Helical" evidence="1">
    <location>
        <begin position="50"/>
        <end position="70"/>
    </location>
</feature>
<feature type="transmembrane region" description="Helical" evidence="1">
    <location>
        <begin position="76"/>
        <end position="96"/>
    </location>
</feature>
<feature type="transmembrane region" description="Helical" evidence="1">
    <location>
        <begin position="121"/>
        <end position="141"/>
    </location>
</feature>
<feature type="transmembrane region" description="Helical" evidence="1">
    <location>
        <begin position="149"/>
        <end position="169"/>
    </location>
</feature>
<comment type="function">
    <text evidence="1">Plays a role in cell envelope biogenesis, maintenance of cell envelope integrity and membrane homeostasis.</text>
</comment>
<comment type="subcellular location">
    <subcellularLocation>
        <location evidence="1">Cell inner membrane</location>
        <topology evidence="1">Multi-pass membrane protein</topology>
    </subcellularLocation>
</comment>
<comment type="similarity">
    <text evidence="1">Belongs to the YciB family.</text>
</comment>
<name>YCIB_CITK8</name>
<protein>
    <recommendedName>
        <fullName evidence="1">Inner membrane-spanning protein YciB</fullName>
    </recommendedName>
</protein>
<dbReference type="EMBL" id="CP000822">
    <property type="protein sequence ID" value="ABV12468.1"/>
    <property type="molecule type" value="Genomic_DNA"/>
</dbReference>
<dbReference type="RefSeq" id="WP_012132211.1">
    <property type="nucleotide sequence ID" value="NC_009792.1"/>
</dbReference>
<dbReference type="STRING" id="290338.CKO_01331"/>
<dbReference type="GeneID" id="45135437"/>
<dbReference type="KEGG" id="cko:CKO_01331"/>
<dbReference type="HOGENOM" id="CLU_089554_2_0_6"/>
<dbReference type="OrthoDB" id="9788219at2"/>
<dbReference type="Proteomes" id="UP000008148">
    <property type="component" value="Chromosome"/>
</dbReference>
<dbReference type="GO" id="GO:0005886">
    <property type="term" value="C:plasma membrane"/>
    <property type="evidence" value="ECO:0007669"/>
    <property type="project" value="UniProtKB-SubCell"/>
</dbReference>
<dbReference type="HAMAP" id="MF_00189">
    <property type="entry name" value="YciB"/>
    <property type="match status" value="1"/>
</dbReference>
<dbReference type="InterPro" id="IPR006008">
    <property type="entry name" value="YciB"/>
</dbReference>
<dbReference type="NCBIfam" id="TIGR00997">
    <property type="entry name" value="ispZ"/>
    <property type="match status" value="1"/>
</dbReference>
<dbReference type="NCBIfam" id="NF001324">
    <property type="entry name" value="PRK00259.1-2"/>
    <property type="match status" value="1"/>
</dbReference>
<dbReference type="NCBIfam" id="NF001325">
    <property type="entry name" value="PRK00259.1-3"/>
    <property type="match status" value="1"/>
</dbReference>
<dbReference type="NCBIfam" id="NF001326">
    <property type="entry name" value="PRK00259.1-4"/>
    <property type="match status" value="1"/>
</dbReference>
<dbReference type="PANTHER" id="PTHR36917:SF1">
    <property type="entry name" value="INNER MEMBRANE-SPANNING PROTEIN YCIB"/>
    <property type="match status" value="1"/>
</dbReference>
<dbReference type="PANTHER" id="PTHR36917">
    <property type="entry name" value="INTRACELLULAR SEPTATION PROTEIN A-RELATED"/>
    <property type="match status" value="1"/>
</dbReference>
<dbReference type="Pfam" id="PF04279">
    <property type="entry name" value="IspA"/>
    <property type="match status" value="1"/>
</dbReference>
<organism>
    <name type="scientific">Citrobacter koseri (strain ATCC BAA-895 / CDC 4225-83 / SGSC4696)</name>
    <dbReference type="NCBI Taxonomy" id="290338"/>
    <lineage>
        <taxon>Bacteria</taxon>
        <taxon>Pseudomonadati</taxon>
        <taxon>Pseudomonadota</taxon>
        <taxon>Gammaproteobacteria</taxon>
        <taxon>Enterobacterales</taxon>
        <taxon>Enterobacteriaceae</taxon>
        <taxon>Citrobacter</taxon>
    </lineage>
</organism>
<proteinExistence type="inferred from homology"/>
<accession>A8AG55</accession>
<sequence>MKQFLDFLPLVVFFAFYKLYDIYAATSALIVATAIVLIYSWVRYRKVEKMALITFVLVAVFGGLTIFFHNDEFIKWKVTVIYGLFAGALLISQWVMKKPLIQRMLGKELTLPQPVWSKLNLAWAVFFILCGLANIYIAFWLPQNIWVNFKVFGLTALTLIFTLLSGVYIYRHLPQEDKS</sequence>
<reference key="1">
    <citation type="submission" date="2007-08" db="EMBL/GenBank/DDBJ databases">
        <authorList>
            <consortium name="The Citrobacter koseri Genome Sequencing Project"/>
            <person name="McClelland M."/>
            <person name="Sanderson E.K."/>
            <person name="Porwollik S."/>
            <person name="Spieth J."/>
            <person name="Clifton W.S."/>
            <person name="Latreille P."/>
            <person name="Courtney L."/>
            <person name="Wang C."/>
            <person name="Pepin K."/>
            <person name="Bhonagiri V."/>
            <person name="Nash W."/>
            <person name="Johnson M."/>
            <person name="Thiruvilangam P."/>
            <person name="Wilson R."/>
        </authorList>
    </citation>
    <scope>NUCLEOTIDE SEQUENCE [LARGE SCALE GENOMIC DNA]</scope>
    <source>
        <strain>ATCC BAA-895 / CDC 4225-83 / SGSC4696</strain>
    </source>
</reference>